<keyword id="KW-0963">Cytoplasm</keyword>
<keyword id="KW-0489">Methyltransferase</keyword>
<keyword id="KW-0698">rRNA processing</keyword>
<keyword id="KW-0949">S-adenosyl-L-methionine</keyword>
<keyword id="KW-0808">Transferase</keyword>
<dbReference type="EC" id="2.1.1.199" evidence="1"/>
<dbReference type="EMBL" id="AP006716">
    <property type="protein sequence ID" value="BAE05045.1"/>
    <property type="molecule type" value="Genomic_DNA"/>
</dbReference>
<dbReference type="RefSeq" id="WP_011276021.1">
    <property type="nucleotide sequence ID" value="NC_007168.1"/>
</dbReference>
<dbReference type="SMR" id="Q4L5N0"/>
<dbReference type="KEGG" id="sha:SH1736"/>
<dbReference type="eggNOG" id="COG0275">
    <property type="taxonomic scope" value="Bacteria"/>
</dbReference>
<dbReference type="HOGENOM" id="CLU_038422_2_0_9"/>
<dbReference type="OrthoDB" id="9806637at2"/>
<dbReference type="Proteomes" id="UP000000543">
    <property type="component" value="Chromosome"/>
</dbReference>
<dbReference type="GO" id="GO:0005737">
    <property type="term" value="C:cytoplasm"/>
    <property type="evidence" value="ECO:0007669"/>
    <property type="project" value="UniProtKB-SubCell"/>
</dbReference>
<dbReference type="GO" id="GO:0071424">
    <property type="term" value="F:rRNA (cytosine-N4-)-methyltransferase activity"/>
    <property type="evidence" value="ECO:0007669"/>
    <property type="project" value="UniProtKB-UniRule"/>
</dbReference>
<dbReference type="GO" id="GO:0070475">
    <property type="term" value="P:rRNA base methylation"/>
    <property type="evidence" value="ECO:0007669"/>
    <property type="project" value="UniProtKB-UniRule"/>
</dbReference>
<dbReference type="FunFam" id="1.10.150.170:FF:000001">
    <property type="entry name" value="Ribosomal RNA small subunit methyltransferase H"/>
    <property type="match status" value="1"/>
</dbReference>
<dbReference type="Gene3D" id="1.10.150.170">
    <property type="entry name" value="Putative methyltransferase TM0872, insert domain"/>
    <property type="match status" value="1"/>
</dbReference>
<dbReference type="Gene3D" id="3.40.50.150">
    <property type="entry name" value="Vaccinia Virus protein VP39"/>
    <property type="match status" value="1"/>
</dbReference>
<dbReference type="HAMAP" id="MF_01007">
    <property type="entry name" value="16SrRNA_methyltr_H"/>
    <property type="match status" value="1"/>
</dbReference>
<dbReference type="InterPro" id="IPR002903">
    <property type="entry name" value="RsmH"/>
</dbReference>
<dbReference type="InterPro" id="IPR023397">
    <property type="entry name" value="SAM-dep_MeTrfase_MraW_recog"/>
</dbReference>
<dbReference type="InterPro" id="IPR029063">
    <property type="entry name" value="SAM-dependent_MTases_sf"/>
</dbReference>
<dbReference type="NCBIfam" id="TIGR00006">
    <property type="entry name" value="16S rRNA (cytosine(1402)-N(4))-methyltransferase RsmH"/>
    <property type="match status" value="1"/>
</dbReference>
<dbReference type="PANTHER" id="PTHR11265:SF0">
    <property type="entry name" value="12S RRNA N4-METHYLCYTIDINE METHYLTRANSFERASE"/>
    <property type="match status" value="1"/>
</dbReference>
<dbReference type="PANTHER" id="PTHR11265">
    <property type="entry name" value="S-ADENOSYL-METHYLTRANSFERASE MRAW"/>
    <property type="match status" value="1"/>
</dbReference>
<dbReference type="Pfam" id="PF01795">
    <property type="entry name" value="Methyltransf_5"/>
    <property type="match status" value="1"/>
</dbReference>
<dbReference type="PIRSF" id="PIRSF004486">
    <property type="entry name" value="MraW"/>
    <property type="match status" value="1"/>
</dbReference>
<dbReference type="SUPFAM" id="SSF81799">
    <property type="entry name" value="Putative methyltransferase TM0872, insert domain"/>
    <property type="match status" value="1"/>
</dbReference>
<dbReference type="SUPFAM" id="SSF53335">
    <property type="entry name" value="S-adenosyl-L-methionine-dependent methyltransferases"/>
    <property type="match status" value="1"/>
</dbReference>
<accession>Q4L5N0</accession>
<sequence>MFHHISVMLNETIDYLDIKEDGIYVDCTLGGAGHALYLLNQLNDDGRLIAIDQDTTALDNAKEVLKDHLHKVTFVHSNFRELTDILKNLNIEKVDGIYYDLGVSSPQLDVPERGFSYHHDAKLDMRMDQTQQLSAYEVVNQWPYEALVKIFYRYGEEKFSKQIARRIETHREHQPIETTLELVDIIKEGIPAKARRKGGHPAKRVFQAIRIAVNDELSAFEDSIEQAIELVKVGGRISVITFHSLEDRLCKQMFQEYEKGPDVPRGLPIIPEAYTPKLKRVNRKPITATDTDLDENNRARSAKLRVAEILK</sequence>
<name>RSMH_STAHJ</name>
<reference key="1">
    <citation type="journal article" date="2005" name="J. Bacteriol.">
        <title>Whole-genome sequencing of Staphylococcus haemolyticus uncovers the extreme plasticity of its genome and the evolution of human-colonizing staphylococcal species.</title>
        <authorList>
            <person name="Takeuchi F."/>
            <person name="Watanabe S."/>
            <person name="Baba T."/>
            <person name="Yuzawa H."/>
            <person name="Ito T."/>
            <person name="Morimoto Y."/>
            <person name="Kuroda M."/>
            <person name="Cui L."/>
            <person name="Takahashi M."/>
            <person name="Ankai A."/>
            <person name="Baba S."/>
            <person name="Fukui S."/>
            <person name="Lee J.C."/>
            <person name="Hiramatsu K."/>
        </authorList>
    </citation>
    <scope>NUCLEOTIDE SEQUENCE [LARGE SCALE GENOMIC DNA]</scope>
    <source>
        <strain>JCSC1435</strain>
    </source>
</reference>
<evidence type="ECO:0000255" key="1">
    <source>
        <dbReference type="HAMAP-Rule" id="MF_01007"/>
    </source>
</evidence>
<feature type="chain" id="PRO_0000223566" description="Ribosomal RNA small subunit methyltransferase H">
    <location>
        <begin position="1"/>
        <end position="311"/>
    </location>
</feature>
<feature type="binding site" evidence="1">
    <location>
        <begin position="32"/>
        <end position="34"/>
    </location>
    <ligand>
        <name>S-adenosyl-L-methionine</name>
        <dbReference type="ChEBI" id="CHEBI:59789"/>
    </ligand>
</feature>
<feature type="binding site" evidence="1">
    <location>
        <position position="52"/>
    </location>
    <ligand>
        <name>S-adenosyl-L-methionine</name>
        <dbReference type="ChEBI" id="CHEBI:59789"/>
    </ligand>
</feature>
<feature type="binding site" evidence="1">
    <location>
        <position position="79"/>
    </location>
    <ligand>
        <name>S-adenosyl-L-methionine</name>
        <dbReference type="ChEBI" id="CHEBI:59789"/>
    </ligand>
</feature>
<feature type="binding site" evidence="1">
    <location>
        <position position="100"/>
    </location>
    <ligand>
        <name>S-adenosyl-L-methionine</name>
        <dbReference type="ChEBI" id="CHEBI:59789"/>
    </ligand>
</feature>
<feature type="binding site" evidence="1">
    <location>
        <position position="107"/>
    </location>
    <ligand>
        <name>S-adenosyl-L-methionine</name>
        <dbReference type="ChEBI" id="CHEBI:59789"/>
    </ligand>
</feature>
<gene>
    <name evidence="1" type="primary">rsmH</name>
    <name type="synonym">mraW</name>
    <name type="ordered locus">SH1736</name>
</gene>
<proteinExistence type="inferred from homology"/>
<organism>
    <name type="scientific">Staphylococcus haemolyticus (strain JCSC1435)</name>
    <dbReference type="NCBI Taxonomy" id="279808"/>
    <lineage>
        <taxon>Bacteria</taxon>
        <taxon>Bacillati</taxon>
        <taxon>Bacillota</taxon>
        <taxon>Bacilli</taxon>
        <taxon>Bacillales</taxon>
        <taxon>Staphylococcaceae</taxon>
        <taxon>Staphylococcus</taxon>
    </lineage>
</organism>
<protein>
    <recommendedName>
        <fullName evidence="1">Ribosomal RNA small subunit methyltransferase H</fullName>
        <ecNumber evidence="1">2.1.1.199</ecNumber>
    </recommendedName>
    <alternativeName>
        <fullName evidence="1">16S rRNA m(4)C1402 methyltransferase</fullName>
    </alternativeName>
    <alternativeName>
        <fullName evidence="1">rRNA (cytosine-N(4)-)-methyltransferase RsmH</fullName>
    </alternativeName>
</protein>
<comment type="function">
    <text evidence="1">Specifically methylates the N4 position of cytidine in position 1402 (C1402) of 16S rRNA.</text>
</comment>
<comment type="catalytic activity">
    <reaction evidence="1">
        <text>cytidine(1402) in 16S rRNA + S-adenosyl-L-methionine = N(4)-methylcytidine(1402) in 16S rRNA + S-adenosyl-L-homocysteine + H(+)</text>
        <dbReference type="Rhea" id="RHEA:42928"/>
        <dbReference type="Rhea" id="RHEA-COMP:10286"/>
        <dbReference type="Rhea" id="RHEA-COMP:10287"/>
        <dbReference type="ChEBI" id="CHEBI:15378"/>
        <dbReference type="ChEBI" id="CHEBI:57856"/>
        <dbReference type="ChEBI" id="CHEBI:59789"/>
        <dbReference type="ChEBI" id="CHEBI:74506"/>
        <dbReference type="ChEBI" id="CHEBI:82748"/>
        <dbReference type="EC" id="2.1.1.199"/>
    </reaction>
</comment>
<comment type="subcellular location">
    <subcellularLocation>
        <location evidence="1">Cytoplasm</location>
    </subcellularLocation>
</comment>
<comment type="similarity">
    <text evidence="1">Belongs to the methyltransferase superfamily. RsmH family.</text>
</comment>